<sequence>MDHHVSTIKPRRIQNQNVIHRLERRRISSGKAGTHWHQVRVFHQNVFPNFTVVNVEKPPCFLRKFSPDGRYFIAFSSDQTSLEIYEYQGCQAAEDLLQGYEGEILSNGNDQRSVSIRGRLFERFFVLLHITNVAANGEHLNRECSLFTDDCRCVIVGSAAYLPDEPHPPFYEVYRNSESVTPNPRSPLEDYSLHIIDLHTGRLCDTRTFKCDKVVLSHNQGLYLYKNILAILSVQQQTIHVFQVTPEGTFIDVRTIGRFCYEDDLLTVSAVFPEVQRDSQTGMANPFRDPFINSLKHRLLVYLWRRAEQDGSAMAKRRFFQYFDQLRQLRMWKMQLLDENHLFIKYTSEDVVTLRVTDPSQASFFVVYNMVTTEVIAVFENTSDELLELFENFCDLFRNATLHSEVQFPCSASSNNFARQIQRRFKDTIINAKYGGHTEAVRRLLGQLPISAQSYSGSPYLDLSLFSYDDKWVSVMERPKTCGDHPIRFYARDSGLLKFEIQAGLLGRPINHTVRRLVAFTFHPFEPFAISVQRTNAEYVVNFHMRHCCT</sequence>
<organism>
    <name type="scientific">Mus musculus</name>
    <name type="common">Mouse</name>
    <dbReference type="NCBI Taxonomy" id="10090"/>
    <lineage>
        <taxon>Eukaryota</taxon>
        <taxon>Metazoa</taxon>
        <taxon>Chordata</taxon>
        <taxon>Craniata</taxon>
        <taxon>Vertebrata</taxon>
        <taxon>Euteleostomi</taxon>
        <taxon>Mammalia</taxon>
        <taxon>Eutheria</taxon>
        <taxon>Euarchontoglires</taxon>
        <taxon>Glires</taxon>
        <taxon>Rodentia</taxon>
        <taxon>Myomorpha</taxon>
        <taxon>Muroidea</taxon>
        <taxon>Muridae</taxon>
        <taxon>Murinae</taxon>
        <taxon>Mus</taxon>
        <taxon>Mus</taxon>
    </lineage>
</organism>
<protein>
    <recommendedName>
        <fullName>DET1 homolog</fullName>
    </recommendedName>
    <alternativeName>
        <fullName>De-etiolated-1 homolog</fullName>
    </alternativeName>
</protein>
<accession>Q9D0A0</accession>
<feature type="chain" id="PRO_0000129027" description="DET1 homolog">
    <location>
        <begin position="1"/>
        <end position="550"/>
    </location>
</feature>
<proteinExistence type="evidence at transcript level"/>
<gene>
    <name type="primary">Det1</name>
</gene>
<dbReference type="EMBL" id="AK011666">
    <property type="protein sequence ID" value="BAB27766.2"/>
    <property type="molecule type" value="mRNA"/>
</dbReference>
<dbReference type="EMBL" id="BC031930">
    <property type="protein sequence ID" value="AAH31930.1"/>
    <property type="molecule type" value="mRNA"/>
</dbReference>
<dbReference type="CCDS" id="CCDS21375.1"/>
<dbReference type="RefSeq" id="NP_083861.1">
    <property type="nucleotide sequence ID" value="NM_029585.4"/>
</dbReference>
<dbReference type="RefSeq" id="XP_017167860.1">
    <property type="nucleotide sequence ID" value="XM_017312371.1"/>
</dbReference>
<dbReference type="BioGRID" id="218085">
    <property type="interactions" value="2"/>
</dbReference>
<dbReference type="DIP" id="DIP-60464N"/>
<dbReference type="FunCoup" id="Q9D0A0">
    <property type="interactions" value="863"/>
</dbReference>
<dbReference type="IntAct" id="Q9D0A0">
    <property type="interactions" value="1"/>
</dbReference>
<dbReference type="STRING" id="10090.ENSMUSP00000032839"/>
<dbReference type="iPTMnet" id="Q9D0A0"/>
<dbReference type="PhosphoSitePlus" id="Q9D0A0"/>
<dbReference type="PaxDb" id="10090-ENSMUSP00000032839"/>
<dbReference type="ProteomicsDB" id="277983"/>
<dbReference type="Ensembl" id="ENSMUST00000032839.13">
    <property type="protein sequence ID" value="ENSMUSP00000032839.7"/>
    <property type="gene ID" value="ENSMUSG00000030610.14"/>
</dbReference>
<dbReference type="GeneID" id="76375"/>
<dbReference type="KEGG" id="mmu:76375"/>
<dbReference type="UCSC" id="uc009hxo.1">
    <property type="organism name" value="mouse"/>
</dbReference>
<dbReference type="AGR" id="MGI:1923625"/>
<dbReference type="CTD" id="55070"/>
<dbReference type="MGI" id="MGI:1923625">
    <property type="gene designation" value="Det1"/>
</dbReference>
<dbReference type="VEuPathDB" id="HostDB:ENSMUSG00000030610"/>
<dbReference type="eggNOG" id="KOG2558">
    <property type="taxonomic scope" value="Eukaryota"/>
</dbReference>
<dbReference type="GeneTree" id="ENSGT00390000005224"/>
<dbReference type="HOGENOM" id="CLU_036725_1_0_1"/>
<dbReference type="InParanoid" id="Q9D0A0"/>
<dbReference type="OMA" id="ITPCLTI"/>
<dbReference type="OrthoDB" id="18339at2759"/>
<dbReference type="PhylomeDB" id="Q9D0A0"/>
<dbReference type="TreeFam" id="TF324729"/>
<dbReference type="Reactome" id="R-MMU-983168">
    <property type="pathway name" value="Antigen processing: Ubiquitination &amp; Proteasome degradation"/>
</dbReference>
<dbReference type="BioGRID-ORCS" id="76375">
    <property type="hits" value="9 hits in 79 CRISPR screens"/>
</dbReference>
<dbReference type="ChiTaRS" id="Det1">
    <property type="organism name" value="mouse"/>
</dbReference>
<dbReference type="PRO" id="PR:Q9D0A0"/>
<dbReference type="Proteomes" id="UP000000589">
    <property type="component" value="Chromosome 7"/>
</dbReference>
<dbReference type="RNAct" id="Q9D0A0">
    <property type="molecule type" value="protein"/>
</dbReference>
<dbReference type="Bgee" id="ENSMUSG00000030610">
    <property type="expression patterns" value="Expressed in hindlimb stylopod muscle and 179 other cell types or tissues"/>
</dbReference>
<dbReference type="ExpressionAtlas" id="Q9D0A0">
    <property type="expression patterns" value="baseline and differential"/>
</dbReference>
<dbReference type="GO" id="GO:0031464">
    <property type="term" value="C:Cul4A-RING E3 ubiquitin ligase complex"/>
    <property type="evidence" value="ECO:0007669"/>
    <property type="project" value="Ensembl"/>
</dbReference>
<dbReference type="GO" id="GO:0005634">
    <property type="term" value="C:nucleus"/>
    <property type="evidence" value="ECO:0007669"/>
    <property type="project" value="UniProtKB-SubCell"/>
</dbReference>
<dbReference type="GO" id="GO:0044877">
    <property type="term" value="F:protein-containing complex binding"/>
    <property type="evidence" value="ECO:0007669"/>
    <property type="project" value="Ensembl"/>
</dbReference>
<dbReference type="GO" id="GO:0031625">
    <property type="term" value="F:ubiquitin protein ligase binding"/>
    <property type="evidence" value="ECO:0007669"/>
    <property type="project" value="Ensembl"/>
</dbReference>
<dbReference type="GO" id="GO:1990756">
    <property type="term" value="F:ubiquitin-like ligase-substrate adaptor activity"/>
    <property type="evidence" value="ECO:0007669"/>
    <property type="project" value="Ensembl"/>
</dbReference>
<dbReference type="GO" id="GO:0032436">
    <property type="term" value="P:positive regulation of proteasomal ubiquitin-dependent protein catabolic process"/>
    <property type="evidence" value="ECO:0007669"/>
    <property type="project" value="Ensembl"/>
</dbReference>
<dbReference type="GO" id="GO:0016567">
    <property type="term" value="P:protein ubiquitination"/>
    <property type="evidence" value="ECO:0007669"/>
    <property type="project" value="Ensembl"/>
</dbReference>
<dbReference type="GO" id="GO:0065003">
    <property type="term" value="P:protein-containing complex assembly"/>
    <property type="evidence" value="ECO:0007669"/>
    <property type="project" value="Ensembl"/>
</dbReference>
<dbReference type="InterPro" id="IPR019138">
    <property type="entry name" value="De-etiolated_protein_1_Det1"/>
</dbReference>
<dbReference type="PANTHER" id="PTHR13374:SF3">
    <property type="entry name" value="DET1 HOMOLOG"/>
    <property type="match status" value="1"/>
</dbReference>
<dbReference type="PANTHER" id="PTHR13374">
    <property type="entry name" value="DET1 HOMOLOG DE-ETIOLATED-1 HOMOLOG"/>
    <property type="match status" value="1"/>
</dbReference>
<dbReference type="Pfam" id="PF09737">
    <property type="entry name" value="Det1"/>
    <property type="match status" value="1"/>
</dbReference>
<keyword id="KW-0539">Nucleus</keyword>
<keyword id="KW-1185">Reference proteome</keyword>
<keyword id="KW-0833">Ubl conjugation pathway</keyword>
<comment type="function">
    <text evidence="1">Component of the E3 ubiquitin ligase DCX DET1-COP1 complex, which is required for ubiquitination and subsequent degradation of target proteins. The complex is involved in JUN ubiquitination and degradation (By similarity).</text>
</comment>
<comment type="subunit">
    <text evidence="1">Component of the DCX DET1-COP1 ubiquitin ligase complex at least composed of RBX1, DET1, DDB1, CUL4A and COP1.</text>
</comment>
<comment type="subcellular location">
    <subcellularLocation>
        <location evidence="1">Nucleus</location>
    </subcellularLocation>
</comment>
<comment type="similarity">
    <text evidence="2">Belongs to the DET1 family.</text>
</comment>
<reference key="1">
    <citation type="journal article" date="2005" name="Science">
        <title>The transcriptional landscape of the mammalian genome.</title>
        <authorList>
            <person name="Carninci P."/>
            <person name="Kasukawa T."/>
            <person name="Katayama S."/>
            <person name="Gough J."/>
            <person name="Frith M.C."/>
            <person name="Maeda N."/>
            <person name="Oyama R."/>
            <person name="Ravasi T."/>
            <person name="Lenhard B."/>
            <person name="Wells C."/>
            <person name="Kodzius R."/>
            <person name="Shimokawa K."/>
            <person name="Bajic V.B."/>
            <person name="Brenner S.E."/>
            <person name="Batalov S."/>
            <person name="Forrest A.R."/>
            <person name="Zavolan M."/>
            <person name="Davis M.J."/>
            <person name="Wilming L.G."/>
            <person name="Aidinis V."/>
            <person name="Allen J.E."/>
            <person name="Ambesi-Impiombato A."/>
            <person name="Apweiler R."/>
            <person name="Aturaliya R.N."/>
            <person name="Bailey T.L."/>
            <person name="Bansal M."/>
            <person name="Baxter L."/>
            <person name="Beisel K.W."/>
            <person name="Bersano T."/>
            <person name="Bono H."/>
            <person name="Chalk A.M."/>
            <person name="Chiu K.P."/>
            <person name="Choudhary V."/>
            <person name="Christoffels A."/>
            <person name="Clutterbuck D.R."/>
            <person name="Crowe M.L."/>
            <person name="Dalla E."/>
            <person name="Dalrymple B.P."/>
            <person name="de Bono B."/>
            <person name="Della Gatta G."/>
            <person name="di Bernardo D."/>
            <person name="Down T."/>
            <person name="Engstrom P."/>
            <person name="Fagiolini M."/>
            <person name="Faulkner G."/>
            <person name="Fletcher C.F."/>
            <person name="Fukushima T."/>
            <person name="Furuno M."/>
            <person name="Futaki S."/>
            <person name="Gariboldi M."/>
            <person name="Georgii-Hemming P."/>
            <person name="Gingeras T.R."/>
            <person name="Gojobori T."/>
            <person name="Green R.E."/>
            <person name="Gustincich S."/>
            <person name="Harbers M."/>
            <person name="Hayashi Y."/>
            <person name="Hensch T.K."/>
            <person name="Hirokawa N."/>
            <person name="Hill D."/>
            <person name="Huminiecki L."/>
            <person name="Iacono M."/>
            <person name="Ikeo K."/>
            <person name="Iwama A."/>
            <person name="Ishikawa T."/>
            <person name="Jakt M."/>
            <person name="Kanapin A."/>
            <person name="Katoh M."/>
            <person name="Kawasawa Y."/>
            <person name="Kelso J."/>
            <person name="Kitamura H."/>
            <person name="Kitano H."/>
            <person name="Kollias G."/>
            <person name="Krishnan S.P."/>
            <person name="Kruger A."/>
            <person name="Kummerfeld S.K."/>
            <person name="Kurochkin I.V."/>
            <person name="Lareau L.F."/>
            <person name="Lazarevic D."/>
            <person name="Lipovich L."/>
            <person name="Liu J."/>
            <person name="Liuni S."/>
            <person name="McWilliam S."/>
            <person name="Madan Babu M."/>
            <person name="Madera M."/>
            <person name="Marchionni L."/>
            <person name="Matsuda H."/>
            <person name="Matsuzawa S."/>
            <person name="Miki H."/>
            <person name="Mignone F."/>
            <person name="Miyake S."/>
            <person name="Morris K."/>
            <person name="Mottagui-Tabar S."/>
            <person name="Mulder N."/>
            <person name="Nakano N."/>
            <person name="Nakauchi H."/>
            <person name="Ng P."/>
            <person name="Nilsson R."/>
            <person name="Nishiguchi S."/>
            <person name="Nishikawa S."/>
            <person name="Nori F."/>
            <person name="Ohara O."/>
            <person name="Okazaki Y."/>
            <person name="Orlando V."/>
            <person name="Pang K.C."/>
            <person name="Pavan W.J."/>
            <person name="Pavesi G."/>
            <person name="Pesole G."/>
            <person name="Petrovsky N."/>
            <person name="Piazza S."/>
            <person name="Reed J."/>
            <person name="Reid J.F."/>
            <person name="Ring B.Z."/>
            <person name="Ringwald M."/>
            <person name="Rost B."/>
            <person name="Ruan Y."/>
            <person name="Salzberg S.L."/>
            <person name="Sandelin A."/>
            <person name="Schneider C."/>
            <person name="Schoenbach C."/>
            <person name="Sekiguchi K."/>
            <person name="Semple C.A."/>
            <person name="Seno S."/>
            <person name="Sessa L."/>
            <person name="Sheng Y."/>
            <person name="Shibata Y."/>
            <person name="Shimada H."/>
            <person name="Shimada K."/>
            <person name="Silva D."/>
            <person name="Sinclair B."/>
            <person name="Sperling S."/>
            <person name="Stupka E."/>
            <person name="Sugiura K."/>
            <person name="Sultana R."/>
            <person name="Takenaka Y."/>
            <person name="Taki K."/>
            <person name="Tammoja K."/>
            <person name="Tan S.L."/>
            <person name="Tang S."/>
            <person name="Taylor M.S."/>
            <person name="Tegner J."/>
            <person name="Teichmann S.A."/>
            <person name="Ueda H.R."/>
            <person name="van Nimwegen E."/>
            <person name="Verardo R."/>
            <person name="Wei C.L."/>
            <person name="Yagi K."/>
            <person name="Yamanishi H."/>
            <person name="Zabarovsky E."/>
            <person name="Zhu S."/>
            <person name="Zimmer A."/>
            <person name="Hide W."/>
            <person name="Bult C."/>
            <person name="Grimmond S.M."/>
            <person name="Teasdale R.D."/>
            <person name="Liu E.T."/>
            <person name="Brusic V."/>
            <person name="Quackenbush J."/>
            <person name="Wahlestedt C."/>
            <person name="Mattick J.S."/>
            <person name="Hume D.A."/>
            <person name="Kai C."/>
            <person name="Sasaki D."/>
            <person name="Tomaru Y."/>
            <person name="Fukuda S."/>
            <person name="Kanamori-Katayama M."/>
            <person name="Suzuki M."/>
            <person name="Aoki J."/>
            <person name="Arakawa T."/>
            <person name="Iida J."/>
            <person name="Imamura K."/>
            <person name="Itoh M."/>
            <person name="Kato T."/>
            <person name="Kawaji H."/>
            <person name="Kawagashira N."/>
            <person name="Kawashima T."/>
            <person name="Kojima M."/>
            <person name="Kondo S."/>
            <person name="Konno H."/>
            <person name="Nakano K."/>
            <person name="Ninomiya N."/>
            <person name="Nishio T."/>
            <person name="Okada M."/>
            <person name="Plessy C."/>
            <person name="Shibata K."/>
            <person name="Shiraki T."/>
            <person name="Suzuki S."/>
            <person name="Tagami M."/>
            <person name="Waki K."/>
            <person name="Watahiki A."/>
            <person name="Okamura-Oho Y."/>
            <person name="Suzuki H."/>
            <person name="Kawai J."/>
            <person name="Hayashizaki Y."/>
        </authorList>
    </citation>
    <scope>NUCLEOTIDE SEQUENCE [LARGE SCALE MRNA]</scope>
    <source>
        <strain>C57BL/6J</strain>
    </source>
</reference>
<reference key="2">
    <citation type="journal article" date="2004" name="Genome Res.">
        <title>The status, quality, and expansion of the NIH full-length cDNA project: the Mammalian Gene Collection (MGC).</title>
        <authorList>
            <consortium name="The MGC Project Team"/>
        </authorList>
    </citation>
    <scope>NUCLEOTIDE SEQUENCE [LARGE SCALE MRNA]</scope>
    <source>
        <strain>Czech II</strain>
        <tissue>Mammary tumor</tissue>
    </source>
</reference>
<name>DET1_MOUSE</name>
<evidence type="ECO:0000250" key="1"/>
<evidence type="ECO:0000305" key="2"/>